<name>RL20_STAAS</name>
<feature type="chain" id="PRO_0000177227" description="Large ribosomal subunit protein bL20">
    <location>
        <begin position="1"/>
        <end position="118"/>
    </location>
</feature>
<sequence>MPRVKGGTVTRARRKKTIKLAKGYFGSKHTLYKVAKQQVMKSGQYAFRDRRQRKRDFRKLWITRINAAARQHEMSYSRLMNGLKKAGIDINRKMLSEIAISDEKAFAQLVTKAKDALK</sequence>
<comment type="function">
    <text evidence="1">Binds directly to 23S ribosomal RNA and is necessary for the in vitro assembly process of the 50S ribosomal subunit. It is not involved in the protein synthesizing functions of that subunit.</text>
</comment>
<comment type="similarity">
    <text evidence="1">Belongs to the bacterial ribosomal protein bL20 family.</text>
</comment>
<proteinExistence type="inferred from homology"/>
<dbReference type="EMBL" id="BX571857">
    <property type="protein sequence ID" value="CAG43409.1"/>
    <property type="molecule type" value="Genomic_DNA"/>
</dbReference>
<dbReference type="RefSeq" id="WP_001138360.1">
    <property type="nucleotide sequence ID" value="NC_002953.3"/>
</dbReference>
<dbReference type="SMR" id="Q6G8P7"/>
<dbReference type="GeneID" id="98346040"/>
<dbReference type="KEGG" id="sas:SAS1607"/>
<dbReference type="HOGENOM" id="CLU_123265_0_1_9"/>
<dbReference type="GO" id="GO:1990904">
    <property type="term" value="C:ribonucleoprotein complex"/>
    <property type="evidence" value="ECO:0007669"/>
    <property type="project" value="UniProtKB-KW"/>
</dbReference>
<dbReference type="GO" id="GO:0005840">
    <property type="term" value="C:ribosome"/>
    <property type="evidence" value="ECO:0007669"/>
    <property type="project" value="UniProtKB-KW"/>
</dbReference>
<dbReference type="GO" id="GO:0019843">
    <property type="term" value="F:rRNA binding"/>
    <property type="evidence" value="ECO:0007669"/>
    <property type="project" value="UniProtKB-UniRule"/>
</dbReference>
<dbReference type="GO" id="GO:0003735">
    <property type="term" value="F:structural constituent of ribosome"/>
    <property type="evidence" value="ECO:0007669"/>
    <property type="project" value="InterPro"/>
</dbReference>
<dbReference type="GO" id="GO:0000027">
    <property type="term" value="P:ribosomal large subunit assembly"/>
    <property type="evidence" value="ECO:0007669"/>
    <property type="project" value="UniProtKB-UniRule"/>
</dbReference>
<dbReference type="GO" id="GO:0006412">
    <property type="term" value="P:translation"/>
    <property type="evidence" value="ECO:0007669"/>
    <property type="project" value="InterPro"/>
</dbReference>
<dbReference type="CDD" id="cd07026">
    <property type="entry name" value="Ribosomal_L20"/>
    <property type="match status" value="1"/>
</dbReference>
<dbReference type="FunFam" id="1.10.1900.20:FF:000001">
    <property type="entry name" value="50S ribosomal protein L20"/>
    <property type="match status" value="1"/>
</dbReference>
<dbReference type="Gene3D" id="6.10.160.10">
    <property type="match status" value="1"/>
</dbReference>
<dbReference type="Gene3D" id="1.10.1900.20">
    <property type="entry name" value="Ribosomal protein L20"/>
    <property type="match status" value="1"/>
</dbReference>
<dbReference type="HAMAP" id="MF_00382">
    <property type="entry name" value="Ribosomal_bL20"/>
    <property type="match status" value="1"/>
</dbReference>
<dbReference type="InterPro" id="IPR005813">
    <property type="entry name" value="Ribosomal_bL20"/>
</dbReference>
<dbReference type="InterPro" id="IPR049946">
    <property type="entry name" value="RIBOSOMAL_L20_CS"/>
</dbReference>
<dbReference type="InterPro" id="IPR035566">
    <property type="entry name" value="Ribosomal_protein_bL20_C"/>
</dbReference>
<dbReference type="NCBIfam" id="TIGR01032">
    <property type="entry name" value="rplT_bact"/>
    <property type="match status" value="1"/>
</dbReference>
<dbReference type="PANTHER" id="PTHR10986">
    <property type="entry name" value="39S RIBOSOMAL PROTEIN L20"/>
    <property type="match status" value="1"/>
</dbReference>
<dbReference type="Pfam" id="PF00453">
    <property type="entry name" value="Ribosomal_L20"/>
    <property type="match status" value="1"/>
</dbReference>
<dbReference type="PRINTS" id="PR00062">
    <property type="entry name" value="RIBOSOMALL20"/>
</dbReference>
<dbReference type="SUPFAM" id="SSF74731">
    <property type="entry name" value="Ribosomal protein L20"/>
    <property type="match status" value="1"/>
</dbReference>
<dbReference type="PROSITE" id="PS00937">
    <property type="entry name" value="RIBOSOMAL_L20"/>
    <property type="match status" value="1"/>
</dbReference>
<organism>
    <name type="scientific">Staphylococcus aureus (strain MSSA476)</name>
    <dbReference type="NCBI Taxonomy" id="282459"/>
    <lineage>
        <taxon>Bacteria</taxon>
        <taxon>Bacillati</taxon>
        <taxon>Bacillota</taxon>
        <taxon>Bacilli</taxon>
        <taxon>Bacillales</taxon>
        <taxon>Staphylococcaceae</taxon>
        <taxon>Staphylococcus</taxon>
    </lineage>
</organism>
<protein>
    <recommendedName>
        <fullName evidence="1">Large ribosomal subunit protein bL20</fullName>
    </recommendedName>
    <alternativeName>
        <fullName evidence="2">50S ribosomal protein L20</fullName>
    </alternativeName>
</protein>
<gene>
    <name evidence="1" type="primary">rplT</name>
    <name type="ordered locus">SAS1607</name>
</gene>
<keyword id="KW-0687">Ribonucleoprotein</keyword>
<keyword id="KW-0689">Ribosomal protein</keyword>
<keyword id="KW-0694">RNA-binding</keyword>
<keyword id="KW-0699">rRNA-binding</keyword>
<evidence type="ECO:0000255" key="1">
    <source>
        <dbReference type="HAMAP-Rule" id="MF_00382"/>
    </source>
</evidence>
<evidence type="ECO:0000305" key="2"/>
<reference key="1">
    <citation type="journal article" date="2004" name="Proc. Natl. Acad. Sci. U.S.A.">
        <title>Complete genomes of two clinical Staphylococcus aureus strains: evidence for the rapid evolution of virulence and drug resistance.</title>
        <authorList>
            <person name="Holden M.T.G."/>
            <person name="Feil E.J."/>
            <person name="Lindsay J.A."/>
            <person name="Peacock S.J."/>
            <person name="Day N.P.J."/>
            <person name="Enright M.C."/>
            <person name="Foster T.J."/>
            <person name="Moore C.E."/>
            <person name="Hurst L."/>
            <person name="Atkin R."/>
            <person name="Barron A."/>
            <person name="Bason N."/>
            <person name="Bentley S.D."/>
            <person name="Chillingworth C."/>
            <person name="Chillingworth T."/>
            <person name="Churcher C."/>
            <person name="Clark L."/>
            <person name="Corton C."/>
            <person name="Cronin A."/>
            <person name="Doggett J."/>
            <person name="Dowd L."/>
            <person name="Feltwell T."/>
            <person name="Hance Z."/>
            <person name="Harris B."/>
            <person name="Hauser H."/>
            <person name="Holroyd S."/>
            <person name="Jagels K."/>
            <person name="James K.D."/>
            <person name="Lennard N."/>
            <person name="Line A."/>
            <person name="Mayes R."/>
            <person name="Moule S."/>
            <person name="Mungall K."/>
            <person name="Ormond D."/>
            <person name="Quail M.A."/>
            <person name="Rabbinowitsch E."/>
            <person name="Rutherford K.M."/>
            <person name="Sanders M."/>
            <person name="Sharp S."/>
            <person name="Simmonds M."/>
            <person name="Stevens K."/>
            <person name="Whitehead S."/>
            <person name="Barrell B.G."/>
            <person name="Spratt B.G."/>
            <person name="Parkhill J."/>
        </authorList>
    </citation>
    <scope>NUCLEOTIDE SEQUENCE [LARGE SCALE GENOMIC DNA]</scope>
    <source>
        <strain>MSSA476</strain>
    </source>
</reference>
<accession>Q6G8P7</accession>